<name>NUOA_RHOCA</name>
<feature type="chain" id="PRO_0000117874" description="NADH-quinone oxidoreductase subunit A">
    <location>
        <begin position="1"/>
        <end position="126"/>
    </location>
</feature>
<feature type="transmembrane region" description="Helical" evidence="1">
    <location>
        <begin position="16"/>
        <end position="36"/>
    </location>
</feature>
<feature type="transmembrane region" description="Helical" evidence="1">
    <location>
        <begin position="73"/>
        <end position="93"/>
    </location>
</feature>
<feature type="transmembrane region" description="Helical" evidence="1">
    <location>
        <begin position="95"/>
        <end position="115"/>
    </location>
</feature>
<keyword id="KW-0997">Cell inner membrane</keyword>
<keyword id="KW-1003">Cell membrane</keyword>
<keyword id="KW-0472">Membrane</keyword>
<keyword id="KW-0520">NAD</keyword>
<keyword id="KW-0874">Quinone</keyword>
<keyword id="KW-1278">Translocase</keyword>
<keyword id="KW-0812">Transmembrane</keyword>
<keyword id="KW-1133">Transmembrane helix</keyword>
<keyword id="KW-0813">Transport</keyword>
<keyword id="KW-0830">Ubiquinone</keyword>
<sequence>MQDALTHGMLREYLPILVLLAMAIGLGLILIAAAAIIAYRNPDPEKVSAYECGFNAFDDARMKFDVRFYLVSILFIIFDLEVAFLFPWAVAFGDMSMTAFWSMMVFLSVLTVGFAYEWKKGALEWA</sequence>
<comment type="function">
    <text>NDH-1 shuttles electrons from NADH, via FMN and iron-sulfur (Fe-S) centers, to quinones in the respiratory chain. The immediate electron acceptor for the enzyme in this species is believed to be ubiquinone. Couples the redox reaction to proton translocation (for every two electrons transferred, four hydrogen ions are translocated across the cytoplasmic membrane), and thus conserves the redox energy in a proton gradient.</text>
</comment>
<comment type="catalytic activity">
    <reaction evidence="1">
        <text>a quinone + NADH + 5 H(+)(in) = a quinol + NAD(+) + 4 H(+)(out)</text>
        <dbReference type="Rhea" id="RHEA:57888"/>
        <dbReference type="ChEBI" id="CHEBI:15378"/>
        <dbReference type="ChEBI" id="CHEBI:24646"/>
        <dbReference type="ChEBI" id="CHEBI:57540"/>
        <dbReference type="ChEBI" id="CHEBI:57945"/>
        <dbReference type="ChEBI" id="CHEBI:132124"/>
    </reaction>
</comment>
<comment type="subunit">
    <text evidence="1">NDH-1 is composed of 14 different subunits. Subunits NuoA, H, J, K, L, M, N constitute the membrane sector of the complex.</text>
</comment>
<comment type="subcellular location">
    <subcellularLocation>
        <location evidence="1">Cell inner membrane</location>
        <topology evidence="1">Multi-pass membrane protein</topology>
    </subcellularLocation>
</comment>
<comment type="similarity">
    <text evidence="1">Belongs to the complex I subunit 3 family.</text>
</comment>
<dbReference type="EC" id="7.1.1.-" evidence="1"/>
<dbReference type="EMBL" id="AF029365">
    <property type="protein sequence ID" value="AAC24985.1"/>
    <property type="molecule type" value="Genomic_DNA"/>
</dbReference>
<dbReference type="SMR" id="O84969"/>
<dbReference type="GO" id="GO:0030964">
    <property type="term" value="C:NADH dehydrogenase complex"/>
    <property type="evidence" value="ECO:0007669"/>
    <property type="project" value="TreeGrafter"/>
</dbReference>
<dbReference type="GO" id="GO:0005886">
    <property type="term" value="C:plasma membrane"/>
    <property type="evidence" value="ECO:0007669"/>
    <property type="project" value="UniProtKB-SubCell"/>
</dbReference>
<dbReference type="GO" id="GO:0008137">
    <property type="term" value="F:NADH dehydrogenase (ubiquinone) activity"/>
    <property type="evidence" value="ECO:0007669"/>
    <property type="project" value="InterPro"/>
</dbReference>
<dbReference type="GO" id="GO:0050136">
    <property type="term" value="F:NADH:ubiquinone reductase (non-electrogenic) activity"/>
    <property type="evidence" value="ECO:0007669"/>
    <property type="project" value="UniProtKB-UniRule"/>
</dbReference>
<dbReference type="GO" id="GO:0048038">
    <property type="term" value="F:quinone binding"/>
    <property type="evidence" value="ECO:0007669"/>
    <property type="project" value="UniProtKB-KW"/>
</dbReference>
<dbReference type="FunFam" id="1.20.58.1610:FF:000004">
    <property type="entry name" value="NADH-quinone oxidoreductase subunit A"/>
    <property type="match status" value="1"/>
</dbReference>
<dbReference type="Gene3D" id="1.20.58.1610">
    <property type="entry name" value="NADH:ubiquinone/plastoquinone oxidoreductase, chain 3"/>
    <property type="match status" value="1"/>
</dbReference>
<dbReference type="HAMAP" id="MF_01394">
    <property type="entry name" value="NDH1_NuoA"/>
    <property type="match status" value="1"/>
</dbReference>
<dbReference type="InterPro" id="IPR023043">
    <property type="entry name" value="NAD(P)H_OxRDtase_bac/plastid"/>
</dbReference>
<dbReference type="InterPro" id="IPR000440">
    <property type="entry name" value="NADH_UbQ/plastoQ_OxRdtase_su3"/>
</dbReference>
<dbReference type="InterPro" id="IPR038430">
    <property type="entry name" value="NDAH_ubi_oxred_su3_sf"/>
</dbReference>
<dbReference type="PANTHER" id="PTHR11058">
    <property type="entry name" value="NADH-UBIQUINONE OXIDOREDUCTASE CHAIN 3"/>
    <property type="match status" value="1"/>
</dbReference>
<dbReference type="PANTHER" id="PTHR11058:SF9">
    <property type="entry name" value="NADH-UBIQUINONE OXIDOREDUCTASE CHAIN 3"/>
    <property type="match status" value="1"/>
</dbReference>
<dbReference type="Pfam" id="PF00507">
    <property type="entry name" value="Oxidored_q4"/>
    <property type="match status" value="1"/>
</dbReference>
<reference key="1">
    <citation type="submission" date="1997-10" db="EMBL/GenBank/DDBJ databases">
        <authorList>
            <person name="Dupuis A."/>
            <person name="Issartel J.P."/>
        </authorList>
    </citation>
    <scope>NUCLEOTIDE SEQUENCE [GENOMIC DNA]</scope>
    <source>
        <strain>ATCC 33303 / B10</strain>
    </source>
</reference>
<gene>
    <name evidence="1" type="primary">nuoA</name>
</gene>
<protein>
    <recommendedName>
        <fullName evidence="1">NADH-quinone oxidoreductase subunit A</fullName>
        <ecNumber evidence="1">7.1.1.-</ecNumber>
    </recommendedName>
    <alternativeName>
        <fullName evidence="1">NADH dehydrogenase I subunit A</fullName>
    </alternativeName>
    <alternativeName>
        <fullName evidence="1">NDH-1 subunit A</fullName>
    </alternativeName>
    <alternativeName>
        <fullName evidence="1">NUO1</fullName>
    </alternativeName>
</protein>
<evidence type="ECO:0000255" key="1">
    <source>
        <dbReference type="HAMAP-Rule" id="MF_01394"/>
    </source>
</evidence>
<accession>O84969</accession>
<proteinExistence type="inferred from homology"/>
<organism>
    <name type="scientific">Rhodobacter capsulatus</name>
    <name type="common">Rhodopseudomonas capsulata</name>
    <dbReference type="NCBI Taxonomy" id="1061"/>
    <lineage>
        <taxon>Bacteria</taxon>
        <taxon>Pseudomonadati</taxon>
        <taxon>Pseudomonadota</taxon>
        <taxon>Alphaproteobacteria</taxon>
        <taxon>Rhodobacterales</taxon>
        <taxon>Rhodobacter group</taxon>
        <taxon>Rhodobacter</taxon>
    </lineage>
</organism>